<comment type="subcellular location">
    <subcellularLocation>
        <location evidence="2">Cell membrane</location>
        <topology evidence="2">Multi-pass membrane protein</topology>
    </subcellularLocation>
</comment>
<organism>
    <name type="scientific">Bacillus subtilis (strain 168)</name>
    <dbReference type="NCBI Taxonomy" id="224308"/>
    <lineage>
        <taxon>Bacteria</taxon>
        <taxon>Bacillati</taxon>
        <taxon>Bacillota</taxon>
        <taxon>Bacilli</taxon>
        <taxon>Bacillales</taxon>
        <taxon>Bacillaceae</taxon>
        <taxon>Bacillus</taxon>
    </lineage>
</organism>
<keyword id="KW-1003">Cell membrane</keyword>
<keyword id="KW-0472">Membrane</keyword>
<keyword id="KW-1185">Reference proteome</keyword>
<keyword id="KW-0812">Transmembrane</keyword>
<keyword id="KW-1133">Transmembrane helix</keyword>
<protein>
    <recommendedName>
        <fullName>Uncharacterized protein YrhK</fullName>
    </recommendedName>
</protein>
<reference key="1">
    <citation type="journal article" date="1997" name="Microbiology">
        <title>Sequence of the Bacillus subtilis genome region in the vicinity of the lev operon reveals two new extracytoplasmic function RNA polymerase sigma factors SigV and SigZ.</title>
        <authorList>
            <person name="Sorokin A."/>
            <person name="Bolotin A."/>
            <person name="Purnelle B."/>
            <person name="Hilbert H."/>
            <person name="Lauber J."/>
            <person name="Duesterhoeft A."/>
            <person name="Ehrlich S.D."/>
        </authorList>
    </citation>
    <scope>NUCLEOTIDE SEQUENCE [GENOMIC DNA]</scope>
    <source>
        <strain>168</strain>
    </source>
</reference>
<reference key="2">
    <citation type="journal article" date="1997" name="Nature">
        <title>The complete genome sequence of the Gram-positive bacterium Bacillus subtilis.</title>
        <authorList>
            <person name="Kunst F."/>
            <person name="Ogasawara N."/>
            <person name="Moszer I."/>
            <person name="Albertini A.M."/>
            <person name="Alloni G."/>
            <person name="Azevedo V."/>
            <person name="Bertero M.G."/>
            <person name="Bessieres P."/>
            <person name="Bolotin A."/>
            <person name="Borchert S."/>
            <person name="Borriss R."/>
            <person name="Boursier L."/>
            <person name="Brans A."/>
            <person name="Braun M."/>
            <person name="Brignell S.C."/>
            <person name="Bron S."/>
            <person name="Brouillet S."/>
            <person name="Bruschi C.V."/>
            <person name="Caldwell B."/>
            <person name="Capuano V."/>
            <person name="Carter N.M."/>
            <person name="Choi S.-K."/>
            <person name="Codani J.-J."/>
            <person name="Connerton I.F."/>
            <person name="Cummings N.J."/>
            <person name="Daniel R.A."/>
            <person name="Denizot F."/>
            <person name="Devine K.M."/>
            <person name="Duesterhoeft A."/>
            <person name="Ehrlich S.D."/>
            <person name="Emmerson P.T."/>
            <person name="Entian K.-D."/>
            <person name="Errington J."/>
            <person name="Fabret C."/>
            <person name="Ferrari E."/>
            <person name="Foulger D."/>
            <person name="Fritz C."/>
            <person name="Fujita M."/>
            <person name="Fujita Y."/>
            <person name="Fuma S."/>
            <person name="Galizzi A."/>
            <person name="Galleron N."/>
            <person name="Ghim S.-Y."/>
            <person name="Glaser P."/>
            <person name="Goffeau A."/>
            <person name="Golightly E.J."/>
            <person name="Grandi G."/>
            <person name="Guiseppi G."/>
            <person name="Guy B.J."/>
            <person name="Haga K."/>
            <person name="Haiech J."/>
            <person name="Harwood C.R."/>
            <person name="Henaut A."/>
            <person name="Hilbert H."/>
            <person name="Holsappel S."/>
            <person name="Hosono S."/>
            <person name="Hullo M.-F."/>
            <person name="Itaya M."/>
            <person name="Jones L.-M."/>
            <person name="Joris B."/>
            <person name="Karamata D."/>
            <person name="Kasahara Y."/>
            <person name="Klaerr-Blanchard M."/>
            <person name="Klein C."/>
            <person name="Kobayashi Y."/>
            <person name="Koetter P."/>
            <person name="Koningstein G."/>
            <person name="Krogh S."/>
            <person name="Kumano M."/>
            <person name="Kurita K."/>
            <person name="Lapidus A."/>
            <person name="Lardinois S."/>
            <person name="Lauber J."/>
            <person name="Lazarevic V."/>
            <person name="Lee S.-M."/>
            <person name="Levine A."/>
            <person name="Liu H."/>
            <person name="Masuda S."/>
            <person name="Mauel C."/>
            <person name="Medigue C."/>
            <person name="Medina N."/>
            <person name="Mellado R.P."/>
            <person name="Mizuno M."/>
            <person name="Moestl D."/>
            <person name="Nakai S."/>
            <person name="Noback M."/>
            <person name="Noone D."/>
            <person name="O'Reilly M."/>
            <person name="Ogawa K."/>
            <person name="Ogiwara A."/>
            <person name="Oudega B."/>
            <person name="Park S.-H."/>
            <person name="Parro V."/>
            <person name="Pohl T.M."/>
            <person name="Portetelle D."/>
            <person name="Porwollik S."/>
            <person name="Prescott A.M."/>
            <person name="Presecan E."/>
            <person name="Pujic P."/>
            <person name="Purnelle B."/>
            <person name="Rapoport G."/>
            <person name="Rey M."/>
            <person name="Reynolds S."/>
            <person name="Rieger M."/>
            <person name="Rivolta C."/>
            <person name="Rocha E."/>
            <person name="Roche B."/>
            <person name="Rose M."/>
            <person name="Sadaie Y."/>
            <person name="Sato T."/>
            <person name="Scanlan E."/>
            <person name="Schleich S."/>
            <person name="Schroeter R."/>
            <person name="Scoffone F."/>
            <person name="Sekiguchi J."/>
            <person name="Sekowska A."/>
            <person name="Seror S.J."/>
            <person name="Serror P."/>
            <person name="Shin B.-S."/>
            <person name="Soldo B."/>
            <person name="Sorokin A."/>
            <person name="Tacconi E."/>
            <person name="Takagi T."/>
            <person name="Takahashi H."/>
            <person name="Takemaru K."/>
            <person name="Takeuchi M."/>
            <person name="Tamakoshi A."/>
            <person name="Tanaka T."/>
            <person name="Terpstra P."/>
            <person name="Tognoni A."/>
            <person name="Tosato V."/>
            <person name="Uchiyama S."/>
            <person name="Vandenbol M."/>
            <person name="Vannier F."/>
            <person name="Vassarotti A."/>
            <person name="Viari A."/>
            <person name="Wambutt R."/>
            <person name="Wedler E."/>
            <person name="Wedler H."/>
            <person name="Weitzenegger T."/>
            <person name="Winters P."/>
            <person name="Wipat A."/>
            <person name="Yamamoto H."/>
            <person name="Yamane K."/>
            <person name="Yasumoto K."/>
            <person name="Yata K."/>
            <person name="Yoshida K."/>
            <person name="Yoshikawa H.-F."/>
            <person name="Zumstein E."/>
            <person name="Yoshikawa H."/>
            <person name="Danchin A."/>
        </authorList>
    </citation>
    <scope>NUCLEOTIDE SEQUENCE [LARGE SCALE GENOMIC DNA]</scope>
    <source>
        <strain>168</strain>
    </source>
</reference>
<gene>
    <name type="primary">yrhK</name>
    <name type="ordered locus">BSU27150</name>
</gene>
<sequence>MKGNEEHDIQKELKRYELFFKKRYKVLYTVNDFIIGAMFLVGSFFFFYDRLMSAGIWLFAIGSLLLLIRPTIRLIHDFHYRKHVEQQFKHQSSTDD</sequence>
<proteinExistence type="predicted"/>
<name>YRHK_BACSU</name>
<accession>O05401</accession>
<feature type="chain" id="PRO_0000049867" description="Uncharacterized protein YrhK">
    <location>
        <begin position="1"/>
        <end position="96"/>
    </location>
</feature>
<feature type="transmembrane region" description="Helical" evidence="1">
    <location>
        <begin position="27"/>
        <end position="47"/>
    </location>
</feature>
<feature type="transmembrane region" description="Helical" evidence="1">
    <location>
        <begin position="52"/>
        <end position="72"/>
    </location>
</feature>
<dbReference type="EMBL" id="U93874">
    <property type="protein sequence ID" value="AAB80868.1"/>
    <property type="molecule type" value="Genomic_DNA"/>
</dbReference>
<dbReference type="EMBL" id="AL009126">
    <property type="protein sequence ID" value="CAB14657.1"/>
    <property type="molecule type" value="Genomic_DNA"/>
</dbReference>
<dbReference type="PIR" id="B69975">
    <property type="entry name" value="B69975"/>
</dbReference>
<dbReference type="RefSeq" id="NP_390593.1">
    <property type="nucleotide sequence ID" value="NC_000964.3"/>
</dbReference>
<dbReference type="RefSeq" id="WP_004398584.1">
    <property type="nucleotide sequence ID" value="NZ_OZ025638.1"/>
</dbReference>
<dbReference type="FunCoup" id="O05401">
    <property type="interactions" value="21"/>
</dbReference>
<dbReference type="STRING" id="224308.BSU27150"/>
<dbReference type="PaxDb" id="224308-BSU27150"/>
<dbReference type="EnsemblBacteria" id="CAB14657">
    <property type="protein sequence ID" value="CAB14657"/>
    <property type="gene ID" value="BSU_27150"/>
</dbReference>
<dbReference type="GeneID" id="937587"/>
<dbReference type="KEGG" id="bsu:BSU27150"/>
<dbReference type="PATRIC" id="fig|224308.179.peg.2948"/>
<dbReference type="eggNOG" id="ENOG5032ZWE">
    <property type="taxonomic scope" value="Bacteria"/>
</dbReference>
<dbReference type="InParanoid" id="O05401"/>
<dbReference type="OrthoDB" id="2135402at2"/>
<dbReference type="BioCyc" id="BSUB:BSU27150-MONOMER"/>
<dbReference type="Proteomes" id="UP000001570">
    <property type="component" value="Chromosome"/>
</dbReference>
<dbReference type="GO" id="GO:0005886">
    <property type="term" value="C:plasma membrane"/>
    <property type="evidence" value="ECO:0007669"/>
    <property type="project" value="UniProtKB-SubCell"/>
</dbReference>
<dbReference type="InterPro" id="IPR025424">
    <property type="entry name" value="YrhK_domain"/>
</dbReference>
<dbReference type="Pfam" id="PF14145">
    <property type="entry name" value="YrhK"/>
    <property type="match status" value="1"/>
</dbReference>
<evidence type="ECO:0000255" key="1"/>
<evidence type="ECO:0000305" key="2"/>